<protein>
    <recommendedName>
        <fullName evidence="6">Mitochondrial pyruvate carrier 3</fullName>
    </recommendedName>
    <alternativeName>
        <fullName evidence="5">Protein NEGATIVE REGULATOR OF GUARD CELL ABA SIGNALING 1</fullName>
    </alternativeName>
</protein>
<name>MPC3_ARATH</name>
<organism evidence="8">
    <name type="scientific">Arabidopsis thaliana</name>
    <name type="common">Mouse-ear cress</name>
    <dbReference type="NCBI Taxonomy" id="3702"/>
    <lineage>
        <taxon>Eukaryota</taxon>
        <taxon>Viridiplantae</taxon>
        <taxon>Streptophyta</taxon>
        <taxon>Embryophyta</taxon>
        <taxon>Tracheophyta</taxon>
        <taxon>Spermatophyta</taxon>
        <taxon>Magnoliopsida</taxon>
        <taxon>eudicotyledons</taxon>
        <taxon>Gunneridae</taxon>
        <taxon>Pentapetalae</taxon>
        <taxon>rosids</taxon>
        <taxon>malvids</taxon>
        <taxon>Brassicales</taxon>
        <taxon>Brassicaceae</taxon>
        <taxon>Camelineae</taxon>
        <taxon>Arabidopsis</taxon>
    </lineage>
</organism>
<reference key="1">
    <citation type="journal article" date="2001" name="Mol. Plant Microbe Interact.">
        <title>Arabidopsis thaliana genes expressed in the early compatible interaction with root-knot nematodes.</title>
        <authorList>
            <person name="Vercauteren I."/>
            <person name="van der Schueren E."/>
            <person name="Van Montagu M."/>
            <person name="Gheysen G."/>
        </authorList>
    </citation>
    <scope>NUCLEOTIDE SEQUENCE [MRNA] (ISOFORM 1)</scope>
    <source>
        <strain>cv. Columbia</strain>
        <tissue>Root</tissue>
    </source>
</reference>
<reference key="2">
    <citation type="journal article" date="1999" name="Nature">
        <title>Sequence and analysis of chromosome 4 of the plant Arabidopsis thaliana.</title>
        <authorList>
            <person name="Mayer K.F.X."/>
            <person name="Schueller C."/>
            <person name="Wambutt R."/>
            <person name="Murphy G."/>
            <person name="Volckaert G."/>
            <person name="Pohl T."/>
            <person name="Duesterhoeft A."/>
            <person name="Stiekema W."/>
            <person name="Entian K.-D."/>
            <person name="Terryn N."/>
            <person name="Harris B."/>
            <person name="Ansorge W."/>
            <person name="Brandt P."/>
            <person name="Grivell L.A."/>
            <person name="Rieger M."/>
            <person name="Weichselgartner M."/>
            <person name="de Simone V."/>
            <person name="Obermaier B."/>
            <person name="Mache R."/>
            <person name="Mueller M."/>
            <person name="Kreis M."/>
            <person name="Delseny M."/>
            <person name="Puigdomenech P."/>
            <person name="Watson M."/>
            <person name="Schmidtheini T."/>
            <person name="Reichert B."/>
            <person name="Portetelle D."/>
            <person name="Perez-Alonso M."/>
            <person name="Boutry M."/>
            <person name="Bancroft I."/>
            <person name="Vos P."/>
            <person name="Hoheisel J."/>
            <person name="Zimmermann W."/>
            <person name="Wedler H."/>
            <person name="Ridley P."/>
            <person name="Langham S.-A."/>
            <person name="McCullagh B."/>
            <person name="Bilham L."/>
            <person name="Robben J."/>
            <person name="van der Schueren J."/>
            <person name="Grymonprez B."/>
            <person name="Chuang Y.-J."/>
            <person name="Vandenbussche F."/>
            <person name="Braeken M."/>
            <person name="Weltjens I."/>
            <person name="Voet M."/>
            <person name="Bastiaens I."/>
            <person name="Aert R."/>
            <person name="Defoor E."/>
            <person name="Weitzenegger T."/>
            <person name="Bothe G."/>
            <person name="Ramsperger U."/>
            <person name="Hilbert H."/>
            <person name="Braun M."/>
            <person name="Holzer E."/>
            <person name="Brandt A."/>
            <person name="Peters S."/>
            <person name="van Staveren M."/>
            <person name="Dirkse W."/>
            <person name="Mooijman P."/>
            <person name="Klein Lankhorst R."/>
            <person name="Rose M."/>
            <person name="Hauf J."/>
            <person name="Koetter P."/>
            <person name="Berneiser S."/>
            <person name="Hempel S."/>
            <person name="Feldpausch M."/>
            <person name="Lamberth S."/>
            <person name="Van den Daele H."/>
            <person name="De Keyser A."/>
            <person name="Buysshaert C."/>
            <person name="Gielen J."/>
            <person name="Villarroel R."/>
            <person name="De Clercq R."/>
            <person name="van Montagu M."/>
            <person name="Rogers J."/>
            <person name="Cronin A."/>
            <person name="Quail M.A."/>
            <person name="Bray-Allen S."/>
            <person name="Clark L."/>
            <person name="Doggett J."/>
            <person name="Hall S."/>
            <person name="Kay M."/>
            <person name="Lennard N."/>
            <person name="McLay K."/>
            <person name="Mayes R."/>
            <person name="Pettett A."/>
            <person name="Rajandream M.A."/>
            <person name="Lyne M."/>
            <person name="Benes V."/>
            <person name="Rechmann S."/>
            <person name="Borkova D."/>
            <person name="Bloecker H."/>
            <person name="Scharfe M."/>
            <person name="Grimm M."/>
            <person name="Loehnert T.-H."/>
            <person name="Dose S."/>
            <person name="de Haan M."/>
            <person name="Maarse A.C."/>
            <person name="Schaefer M."/>
            <person name="Mueller-Auer S."/>
            <person name="Gabel C."/>
            <person name="Fuchs M."/>
            <person name="Fartmann B."/>
            <person name="Granderath K."/>
            <person name="Dauner D."/>
            <person name="Herzl A."/>
            <person name="Neumann S."/>
            <person name="Argiriou A."/>
            <person name="Vitale D."/>
            <person name="Liguori R."/>
            <person name="Piravandi E."/>
            <person name="Massenet O."/>
            <person name="Quigley F."/>
            <person name="Clabauld G."/>
            <person name="Muendlein A."/>
            <person name="Felber R."/>
            <person name="Schnabl S."/>
            <person name="Hiller R."/>
            <person name="Schmidt W."/>
            <person name="Lecharny A."/>
            <person name="Aubourg S."/>
            <person name="Chefdor F."/>
            <person name="Cooke R."/>
            <person name="Berger C."/>
            <person name="Monfort A."/>
            <person name="Casacuberta E."/>
            <person name="Gibbons T."/>
            <person name="Weber N."/>
            <person name="Vandenbol M."/>
            <person name="Bargues M."/>
            <person name="Terol J."/>
            <person name="Torres A."/>
            <person name="Perez-Perez A."/>
            <person name="Purnelle B."/>
            <person name="Bent E."/>
            <person name="Johnson S."/>
            <person name="Tacon D."/>
            <person name="Jesse T."/>
            <person name="Heijnen L."/>
            <person name="Schwarz S."/>
            <person name="Scholler P."/>
            <person name="Heber S."/>
            <person name="Francs P."/>
            <person name="Bielke C."/>
            <person name="Frishman D."/>
            <person name="Haase D."/>
            <person name="Lemcke K."/>
            <person name="Mewes H.-W."/>
            <person name="Stocker S."/>
            <person name="Zaccaria P."/>
            <person name="Bevan M."/>
            <person name="Wilson R.K."/>
            <person name="de la Bastide M."/>
            <person name="Habermann K."/>
            <person name="Parnell L."/>
            <person name="Dedhia N."/>
            <person name="Gnoj L."/>
            <person name="Schutz K."/>
            <person name="Huang E."/>
            <person name="Spiegel L."/>
            <person name="Sekhon M."/>
            <person name="Murray J."/>
            <person name="Sheet P."/>
            <person name="Cordes M."/>
            <person name="Abu-Threideh J."/>
            <person name="Stoneking T."/>
            <person name="Kalicki J."/>
            <person name="Graves T."/>
            <person name="Harmon G."/>
            <person name="Edwards J."/>
            <person name="Latreille P."/>
            <person name="Courtney L."/>
            <person name="Cloud J."/>
            <person name="Abbott A."/>
            <person name="Scott K."/>
            <person name="Johnson D."/>
            <person name="Minx P."/>
            <person name="Bentley D."/>
            <person name="Fulton B."/>
            <person name="Miller N."/>
            <person name="Greco T."/>
            <person name="Kemp K."/>
            <person name="Kramer J."/>
            <person name="Fulton L."/>
            <person name="Mardis E."/>
            <person name="Dante M."/>
            <person name="Pepin K."/>
            <person name="Hillier L.W."/>
            <person name="Nelson J."/>
            <person name="Spieth J."/>
            <person name="Ryan E."/>
            <person name="Andrews S."/>
            <person name="Geisel C."/>
            <person name="Layman D."/>
            <person name="Du H."/>
            <person name="Ali J."/>
            <person name="Berghoff A."/>
            <person name="Jones K."/>
            <person name="Drone K."/>
            <person name="Cotton M."/>
            <person name="Joshu C."/>
            <person name="Antonoiu B."/>
            <person name="Zidanic M."/>
            <person name="Strong C."/>
            <person name="Sun H."/>
            <person name="Lamar B."/>
            <person name="Yordan C."/>
            <person name="Ma P."/>
            <person name="Zhong J."/>
            <person name="Preston R."/>
            <person name="Vil D."/>
            <person name="Shekher M."/>
            <person name="Matero A."/>
            <person name="Shah R."/>
            <person name="Swaby I.K."/>
            <person name="O'Shaughnessy A."/>
            <person name="Rodriguez M."/>
            <person name="Hoffman J."/>
            <person name="Till S."/>
            <person name="Granat S."/>
            <person name="Shohdy N."/>
            <person name="Hasegawa A."/>
            <person name="Hameed A."/>
            <person name="Lodhi M."/>
            <person name="Johnson A."/>
            <person name="Chen E."/>
            <person name="Marra M.A."/>
            <person name="Martienssen R."/>
            <person name="McCombie W.R."/>
        </authorList>
    </citation>
    <scope>NUCLEOTIDE SEQUENCE [LARGE SCALE GENOMIC DNA]</scope>
    <source>
        <strain>cv. Columbia</strain>
    </source>
</reference>
<reference key="3">
    <citation type="journal article" date="2017" name="Plant J.">
        <title>Araport11: a complete reannotation of the Arabidopsis thaliana reference genome.</title>
        <authorList>
            <person name="Cheng C.Y."/>
            <person name="Krishnakumar V."/>
            <person name="Chan A.P."/>
            <person name="Thibaud-Nissen F."/>
            <person name="Schobel S."/>
            <person name="Town C.D."/>
        </authorList>
    </citation>
    <scope>GENOME REANNOTATION</scope>
    <source>
        <strain>cv. Columbia</strain>
    </source>
</reference>
<reference key="4">
    <citation type="journal article" date="2003" name="Science">
        <title>Empirical analysis of transcriptional activity in the Arabidopsis genome.</title>
        <authorList>
            <person name="Yamada K."/>
            <person name="Lim J."/>
            <person name="Dale J.M."/>
            <person name="Chen H."/>
            <person name="Shinn P."/>
            <person name="Palm C.J."/>
            <person name="Southwick A.M."/>
            <person name="Wu H.C."/>
            <person name="Kim C.J."/>
            <person name="Nguyen M."/>
            <person name="Pham P.K."/>
            <person name="Cheuk R.F."/>
            <person name="Karlin-Newmann G."/>
            <person name="Liu S.X."/>
            <person name="Lam B."/>
            <person name="Sakano H."/>
            <person name="Wu T."/>
            <person name="Yu G."/>
            <person name="Miranda M."/>
            <person name="Quach H.L."/>
            <person name="Tripp M."/>
            <person name="Chang C.H."/>
            <person name="Lee J.M."/>
            <person name="Toriumi M.J."/>
            <person name="Chan M.M."/>
            <person name="Tang C.C."/>
            <person name="Onodera C.S."/>
            <person name="Deng J.M."/>
            <person name="Akiyama K."/>
            <person name="Ansari Y."/>
            <person name="Arakawa T."/>
            <person name="Banh J."/>
            <person name="Banno F."/>
            <person name="Bowser L."/>
            <person name="Brooks S.Y."/>
            <person name="Carninci P."/>
            <person name="Chao Q."/>
            <person name="Choy N."/>
            <person name="Enju A."/>
            <person name="Goldsmith A.D."/>
            <person name="Gurjal M."/>
            <person name="Hansen N.F."/>
            <person name="Hayashizaki Y."/>
            <person name="Johnson-Hopson C."/>
            <person name="Hsuan V.W."/>
            <person name="Iida K."/>
            <person name="Karnes M."/>
            <person name="Khan S."/>
            <person name="Koesema E."/>
            <person name="Ishida J."/>
            <person name="Jiang P.X."/>
            <person name="Jones T."/>
            <person name="Kawai J."/>
            <person name="Kamiya A."/>
            <person name="Meyers C."/>
            <person name="Nakajima M."/>
            <person name="Narusaka M."/>
            <person name="Seki M."/>
            <person name="Sakurai T."/>
            <person name="Satou M."/>
            <person name="Tamse R."/>
            <person name="Vaysberg M."/>
            <person name="Wallender E.K."/>
            <person name="Wong C."/>
            <person name="Yamamura Y."/>
            <person name="Yuan S."/>
            <person name="Shinozaki K."/>
            <person name="Davis R.W."/>
            <person name="Theologis A."/>
            <person name="Ecker J.R."/>
        </authorList>
    </citation>
    <scope>NUCLEOTIDE SEQUENCE [LARGE SCALE MRNA] (ISOFORM 2)</scope>
    <source>
        <strain>cv. Columbia</strain>
    </source>
</reference>
<reference key="5">
    <citation type="submission" date="2006-07" db="EMBL/GenBank/DDBJ databases">
        <title>Large-scale analysis of RIKEN Arabidopsis full-length (RAFL) cDNAs.</title>
        <authorList>
            <person name="Totoki Y."/>
            <person name="Seki M."/>
            <person name="Ishida J."/>
            <person name="Nakajima M."/>
            <person name="Enju A."/>
            <person name="Kamiya A."/>
            <person name="Narusaka M."/>
            <person name="Shin-i T."/>
            <person name="Nakagawa M."/>
            <person name="Sakamoto N."/>
            <person name="Oishi K."/>
            <person name="Kohara Y."/>
            <person name="Kobayashi M."/>
            <person name="Toyoda A."/>
            <person name="Sakaki Y."/>
            <person name="Sakurai T."/>
            <person name="Iida K."/>
            <person name="Akiyama K."/>
            <person name="Satou M."/>
            <person name="Toyoda T."/>
            <person name="Konagaya A."/>
            <person name="Carninci P."/>
            <person name="Kawai J."/>
            <person name="Hayashizaki Y."/>
            <person name="Shinozaki K."/>
        </authorList>
    </citation>
    <scope>NUCLEOTIDE SEQUENCE [LARGE SCALE MRNA] (ISOFORM 2)</scope>
    <source>
        <strain>cv. Columbia</strain>
    </source>
</reference>
<reference key="6">
    <citation type="journal article" date="2009" name="DNA Res.">
        <title>Analysis of multiple occurrences of alternative splicing events in Arabidopsis thaliana using novel sequenced full-length cDNAs.</title>
        <authorList>
            <person name="Iida K."/>
            <person name="Fukami-Kobayashi K."/>
            <person name="Toyoda A."/>
            <person name="Sakaki Y."/>
            <person name="Kobayashi M."/>
            <person name="Seki M."/>
            <person name="Shinozaki K."/>
        </authorList>
    </citation>
    <scope>NUCLEOTIDE SEQUENCE [LARGE SCALE MRNA] (ISOFORM 1)</scope>
    <source>
        <strain>cv. Columbia</strain>
        <tissue>Flower</tissue>
        <tissue>Silique</tissue>
    </source>
</reference>
<reference key="7">
    <citation type="submission" date="2002-03" db="EMBL/GenBank/DDBJ databases">
        <title>Full-length cDNA from Arabidopsis thaliana.</title>
        <authorList>
            <person name="Brover V.V."/>
            <person name="Troukhan M.E."/>
            <person name="Alexandrov N.A."/>
            <person name="Lu Y.-P."/>
            <person name="Flavell R.B."/>
            <person name="Feldmann K.A."/>
        </authorList>
    </citation>
    <scope>NUCLEOTIDE SEQUENCE [LARGE SCALE MRNA] (ISOFORM 1)</scope>
</reference>
<reference key="8">
    <citation type="journal article" date="2014" name="Mol. Plant">
        <title>NRGA1, a putative mitochondrial pyruvate carrier, mediates ABA regulation of guard cell ion channels and drought stress responses in Arabidopsis.</title>
        <authorList>
            <person name="Li C.L."/>
            <person name="Wang M."/>
            <person name="Ma X.Y."/>
            <person name="Zhang W."/>
        </authorList>
    </citation>
    <scope>FUNCTION</scope>
    <scope>SUBCELLULAR LOCATION</scope>
    <scope>DISRUPTION PHENOTYPE</scope>
    <scope>TISSUE SPECIFICITY</scope>
    <scope>INDUCTION</scope>
</reference>
<sequence length="108" mass="12181">MATSKLQALWNHPAGPKTIHFWAPTFKWGISIANIADFQKPPETLSYPQQIVITGTGLVWSRYSTVITPKNWNLFSVSLGMAVTGIYQLTRKIKHDYVYEANSIVAKE</sequence>
<keyword id="KW-0025">Alternative splicing</keyword>
<keyword id="KW-0472">Membrane</keyword>
<keyword id="KW-0496">Mitochondrion</keyword>
<keyword id="KW-0999">Mitochondrion inner membrane</keyword>
<keyword id="KW-1185">Reference proteome</keyword>
<keyword id="KW-0812">Transmembrane</keyword>
<keyword id="KW-1133">Transmembrane helix</keyword>
<keyword id="KW-0813">Transport</keyword>
<feature type="chain" id="PRO_0000431617" description="Mitochondrial pyruvate carrier 3">
    <location>
        <begin position="1"/>
        <end position="108"/>
    </location>
</feature>
<feature type="transmembrane region" description="Helical" evidence="6">
    <location>
        <begin position="19"/>
        <end position="35"/>
    </location>
</feature>
<feature type="transmembrane region" description="Helical" evidence="6">
    <location>
        <begin position="51"/>
        <end position="67"/>
    </location>
</feature>
<feature type="transmembrane region" description="Helical" evidence="2">
    <location>
        <begin position="74"/>
        <end position="90"/>
    </location>
</feature>
<feature type="splice variant" id="VSP_057338" description="In isoform 2.">
    <original>I</original>
    <variation>IGIILTIGLSYLYSAHIAVMYRCVNFNVYMMPRMAVIVS</variation>
    <location>
        <position position="51"/>
    </location>
</feature>
<gene>
    <name evidence="6" type="primary">MPC3</name>
    <name evidence="4" type="synonym">DiDi 19A-1b</name>
    <name evidence="5" type="synonym">NRGA1</name>
    <name evidence="7" type="ordered locus">At4g05590</name>
    <name evidence="9" type="ORF">F6H8.10</name>
</gene>
<dbReference type="EMBL" id="AJ276762">
    <property type="status" value="NOT_ANNOTATED_CDS"/>
    <property type="molecule type" value="mRNA"/>
</dbReference>
<dbReference type="EMBL" id="AF178045">
    <property type="status" value="NOT_ANNOTATED_CDS"/>
    <property type="molecule type" value="Genomic_DNA"/>
</dbReference>
<dbReference type="EMBL" id="AL161504">
    <property type="protein sequence ID" value="CAB77923.1"/>
    <property type="status" value="ALT_SEQ"/>
    <property type="molecule type" value="Genomic_DNA"/>
</dbReference>
<dbReference type="EMBL" id="CP002687">
    <property type="protein sequence ID" value="AEE82535.1"/>
    <property type="molecule type" value="Genomic_DNA"/>
</dbReference>
<dbReference type="EMBL" id="CP002687">
    <property type="protein sequence ID" value="AEE82536.1"/>
    <property type="molecule type" value="Genomic_DNA"/>
</dbReference>
<dbReference type="EMBL" id="BT004584">
    <property type="protein sequence ID" value="AAO42830.1"/>
    <property type="molecule type" value="mRNA"/>
</dbReference>
<dbReference type="EMBL" id="AK227500">
    <property type="protein sequence ID" value="BAE99500.1"/>
    <property type="molecule type" value="mRNA"/>
</dbReference>
<dbReference type="EMBL" id="AK317025">
    <property type="protein sequence ID" value="BAH19719.1"/>
    <property type="molecule type" value="mRNA"/>
</dbReference>
<dbReference type="EMBL" id="AY086228">
    <property type="protein sequence ID" value="AAM64304.1"/>
    <property type="molecule type" value="mRNA"/>
</dbReference>
<dbReference type="PIR" id="C85070">
    <property type="entry name" value="C85070"/>
</dbReference>
<dbReference type="RefSeq" id="NP_001031587.1">
    <molecule id="Q8LD38-2"/>
    <property type="nucleotide sequence ID" value="NM_001036510.3"/>
</dbReference>
<dbReference type="RefSeq" id="NP_567306.1">
    <molecule id="Q8LD38-1"/>
    <property type="nucleotide sequence ID" value="NM_116797.4"/>
</dbReference>
<dbReference type="SMR" id="Q8LD38"/>
<dbReference type="FunCoup" id="Q8LD38">
    <property type="interactions" value="1471"/>
</dbReference>
<dbReference type="STRING" id="3702.Q8LD38"/>
<dbReference type="TCDB" id="2.A.105.1.4">
    <property type="family name" value="the mitochondrial pyruvate carrier (mpc) family"/>
</dbReference>
<dbReference type="ProteomicsDB" id="239064">
    <molecule id="Q8LD38-1"/>
</dbReference>
<dbReference type="EnsemblPlants" id="AT4G05590.1">
    <molecule id="Q8LD38-1"/>
    <property type="protein sequence ID" value="AT4G05590.1"/>
    <property type="gene ID" value="AT4G05590"/>
</dbReference>
<dbReference type="EnsemblPlants" id="AT4G05590.2">
    <molecule id="Q8LD38-2"/>
    <property type="protein sequence ID" value="AT4G05590.2"/>
    <property type="gene ID" value="AT4G05590"/>
</dbReference>
<dbReference type="GeneID" id="825927"/>
<dbReference type="Gramene" id="AT4G05590.1">
    <molecule id="Q8LD38-1"/>
    <property type="protein sequence ID" value="AT4G05590.1"/>
    <property type="gene ID" value="AT4G05590"/>
</dbReference>
<dbReference type="Gramene" id="AT4G05590.2">
    <molecule id="Q8LD38-2"/>
    <property type="protein sequence ID" value="AT4G05590.2"/>
    <property type="gene ID" value="AT4G05590"/>
</dbReference>
<dbReference type="KEGG" id="ath:AT4G05590"/>
<dbReference type="Araport" id="AT4G05590"/>
<dbReference type="TAIR" id="AT4G05590">
    <property type="gene designation" value="NRGA1"/>
</dbReference>
<dbReference type="HOGENOM" id="CLU_099502_1_2_1"/>
<dbReference type="InParanoid" id="Q8LD38"/>
<dbReference type="OMA" id="ANINDMM"/>
<dbReference type="OrthoDB" id="869189at2759"/>
<dbReference type="PhylomeDB" id="Q8LD38"/>
<dbReference type="PRO" id="PR:Q8LD38"/>
<dbReference type="Proteomes" id="UP000006548">
    <property type="component" value="Chromosome 4"/>
</dbReference>
<dbReference type="ExpressionAtlas" id="Q8LD38">
    <property type="expression patterns" value="baseline and differential"/>
</dbReference>
<dbReference type="GO" id="GO:0005743">
    <property type="term" value="C:mitochondrial inner membrane"/>
    <property type="evidence" value="ECO:0007669"/>
    <property type="project" value="UniProtKB-SubCell"/>
</dbReference>
<dbReference type="GO" id="GO:0005739">
    <property type="term" value="C:mitochondrion"/>
    <property type="evidence" value="ECO:0000314"/>
    <property type="project" value="TAIR"/>
</dbReference>
<dbReference type="GO" id="GO:0006850">
    <property type="term" value="P:mitochondrial pyruvate transmembrane transport"/>
    <property type="evidence" value="ECO:0000315"/>
    <property type="project" value="UniProtKB"/>
</dbReference>
<dbReference type="GO" id="GO:0010360">
    <property type="term" value="P:negative regulation of anion channel activity"/>
    <property type="evidence" value="ECO:0000315"/>
    <property type="project" value="TAIR"/>
</dbReference>
<dbReference type="GO" id="GO:1901017">
    <property type="term" value="P:negative regulation of potassium ion transmembrane transporter activity"/>
    <property type="evidence" value="ECO:0000315"/>
    <property type="project" value="TAIR"/>
</dbReference>
<dbReference type="GO" id="GO:2000070">
    <property type="term" value="P:regulation of response to water deprivation"/>
    <property type="evidence" value="ECO:0000315"/>
    <property type="project" value="TAIR"/>
</dbReference>
<dbReference type="InterPro" id="IPR005336">
    <property type="entry name" value="MPC"/>
</dbReference>
<dbReference type="PANTHER" id="PTHR14154">
    <property type="entry name" value="UPF0041 BRAIN PROTEIN 44-RELATED"/>
    <property type="match status" value="1"/>
</dbReference>
<dbReference type="Pfam" id="PF03650">
    <property type="entry name" value="MPC"/>
    <property type="match status" value="1"/>
</dbReference>
<accession>Q8LD38</accession>
<accession>Q84VZ9</accession>
<accession>Q9M0U5</accession>
<evidence type="ECO:0000250" key="1">
    <source>
        <dbReference type="UniProtKB" id="P53157"/>
    </source>
</evidence>
<evidence type="ECO:0000255" key="2"/>
<evidence type="ECO:0000269" key="3">
    <source>
    </source>
</evidence>
<evidence type="ECO:0000303" key="4">
    <source>
    </source>
</evidence>
<evidence type="ECO:0000303" key="5">
    <source>
    </source>
</evidence>
<evidence type="ECO:0000305" key="6"/>
<evidence type="ECO:0000312" key="7">
    <source>
        <dbReference type="Araport" id="AT4G05590"/>
    </source>
</evidence>
<evidence type="ECO:0000312" key="8">
    <source>
        <dbReference type="EMBL" id="AAM64304.1"/>
    </source>
</evidence>
<evidence type="ECO:0000312" key="9">
    <source>
        <dbReference type="EMBL" id="AF178045"/>
    </source>
</evidence>
<comment type="function">
    <text evidence="3">Mediates the uptake of pyruvate into mitochondria. Negatively regulates ABA-induced guard cell signaling and mediates drought stress responses.</text>
</comment>
<comment type="subcellular location">
    <subcellularLocation>
        <location evidence="3">Mitochondrion</location>
    </subcellularLocation>
    <subcellularLocation>
        <location evidence="1">Mitochondrion inner membrane</location>
        <topology evidence="2">Multi-pass membrane protein</topology>
    </subcellularLocation>
</comment>
<comment type="alternative products">
    <event type="alternative splicing"/>
    <isoform>
        <id>Q8LD38-1</id>
        <name>1</name>
        <sequence type="displayed"/>
    </isoform>
    <isoform>
        <id>Q8LD38-2</id>
        <name>2</name>
        <sequence type="described" ref="VSP_057338"/>
    </isoform>
</comment>
<comment type="tissue specificity">
    <text evidence="3">Abundant in leaf and particularly in the guard cells.</text>
</comment>
<comment type="induction">
    <text evidence="3">By abscisic acid (ABA) and drought stress.</text>
</comment>
<comment type="disruption phenotype">
    <text evidence="3">Abscisic acid (ABA) hypersensitivity of stomatal movements and enhanced drought tolerance.</text>
</comment>
<comment type="miscellaneous">
    <molecule>Isoform 2</molecule>
    <text evidence="6">May be due to an intron retention.</text>
</comment>
<comment type="similarity">
    <text evidence="6">Belongs to the mitochondrial pyruvate carrier (MPC) (TC 2.A.105) family.</text>
</comment>
<comment type="sequence caution" evidence="6">
    <conflict type="erroneous gene model prediction">
        <sequence resource="EMBL-CDS" id="CAB77923"/>
    </conflict>
</comment>
<proteinExistence type="evidence at transcript level"/>